<reference key="1">
    <citation type="journal article" date="2000" name="DNA Res.">
        <title>Complete structure of the chloroplast genome of a legume, Lotus japonicus.</title>
        <authorList>
            <person name="Kato T."/>
            <person name="Kaneko T."/>
            <person name="Sato S."/>
            <person name="Nakamura Y."/>
            <person name="Tabata S."/>
        </authorList>
    </citation>
    <scope>NUCLEOTIDE SEQUENCE [LARGE SCALE GENOMIC DNA]</scope>
    <source>
        <strain>cv. Miyakojima MG-20</strain>
    </source>
</reference>
<protein>
    <recommendedName>
        <fullName>NAD(P)H-quinone oxidoreductase subunit 5, chloroplastic</fullName>
        <ecNumber>7.1.1.-</ecNumber>
    </recommendedName>
    <alternativeName>
        <fullName>NAD(P)H dehydrogenase subunit 5</fullName>
    </alternativeName>
    <alternativeName>
        <fullName>NADH-plastoquinone oxidoreductase subunit 5</fullName>
    </alternativeName>
</protein>
<sequence length="747" mass="84473">MEYTHQSSWIIPFTPLPVPILIGVGLLLFPTATKNLRRMWAFPSIFLLIIVMIFSVDLSIHQIKNSSIYQYVWSWTINTDLSLEFGYLIDSLTSIMSILITTVGILVLIYSDNYMSHDQGYLRFFAYLSFFNTSMLGLVTSSNLIQVYIFWELVGMCSYLLIGFWFTRPIAANACQKAFVTNRVGDFGLLLGILGLYWITGSLEFRDLFQIINNLIDQNEVNIFFITLCALLLFCGSVAKSAQFPLHVWLPDAMEGPTPISALIHAATMVAAGIFLVARLLPFFIAIPSIMNGIAFIGIITVVLGATLAIAQKDIKKNLAYSTMSQLGYMMLALGMGSYRIALFHLITHAYSKALLFLGSGSIIHSMEAIVGYSPNKSQNMLLMGGLTKHVPITKTAFLIGTLSLCGIPPFACFWSKDEILNDSWLYSPIFAIIACSTAGLTAFYMFRIYLLVFEGYFNVHFQNFNGKKNSSFYSISLWGKEGKKKLKNKIHLLSLLTMNNNERTSLFRKRAYLSKINRNVKSITRLFIHSTYFGTKKFPCFYPHESDNTMLFSMLVLVLFTFFVGAIGISFNQEGIDLDILSKLLSPSIDLLHQNSNKSVDWYEFFTNATFSVSIAFFGIFIASFFYKPVYSTLQNLNLLNLFEKNLTKNILADTIINGIYDWSYNRGYIDGFYEISLIASVRKLAKLNSFFDRQVIDGIPNAVGITSFLIGEAFKYVGSGRISSYILFFVFFVLLFLIIFYSFFI</sequence>
<evidence type="ECO:0000250" key="1"/>
<evidence type="ECO:0000255" key="2"/>
<evidence type="ECO:0000305" key="3"/>
<feature type="chain" id="PRO_0000118189" description="NAD(P)H-quinone oxidoreductase subunit 5, chloroplastic">
    <location>
        <begin position="1"/>
        <end position="747"/>
    </location>
</feature>
<feature type="transmembrane region" description="Helical" evidence="2">
    <location>
        <begin position="9"/>
        <end position="29"/>
    </location>
</feature>
<feature type="transmembrane region" description="Helical" evidence="2">
    <location>
        <begin position="40"/>
        <end position="60"/>
    </location>
</feature>
<feature type="transmembrane region" description="Helical" evidence="2">
    <location>
        <begin position="89"/>
        <end position="109"/>
    </location>
</feature>
<feature type="transmembrane region" description="Helical" evidence="2">
    <location>
        <begin position="125"/>
        <end position="145"/>
    </location>
</feature>
<feature type="transmembrane region" description="Helical" evidence="2">
    <location>
        <begin position="147"/>
        <end position="167"/>
    </location>
</feature>
<feature type="transmembrane region" description="Helical" evidence="2">
    <location>
        <begin position="185"/>
        <end position="205"/>
    </location>
</feature>
<feature type="transmembrane region" description="Helical" evidence="2">
    <location>
        <begin position="219"/>
        <end position="239"/>
    </location>
</feature>
<feature type="transmembrane region" description="Helical" evidence="2">
    <location>
        <begin position="258"/>
        <end position="278"/>
    </location>
</feature>
<feature type="transmembrane region" description="Helical" evidence="2">
    <location>
        <begin position="280"/>
        <end position="300"/>
    </location>
</feature>
<feature type="transmembrane region" description="Helical" evidence="2">
    <location>
        <begin position="327"/>
        <end position="347"/>
    </location>
</feature>
<feature type="transmembrane region" description="Helical" evidence="2">
    <location>
        <begin position="354"/>
        <end position="374"/>
    </location>
</feature>
<feature type="transmembrane region" description="Helical" evidence="2">
    <location>
        <begin position="396"/>
        <end position="416"/>
    </location>
</feature>
<feature type="transmembrane region" description="Helical" evidence="2">
    <location>
        <begin position="425"/>
        <end position="445"/>
    </location>
</feature>
<feature type="transmembrane region" description="Helical" evidence="2">
    <location>
        <begin position="552"/>
        <end position="572"/>
    </location>
</feature>
<feature type="transmembrane region" description="Helical" evidence="2">
    <location>
        <begin position="606"/>
        <end position="626"/>
    </location>
</feature>
<feature type="transmembrane region" description="Helical" evidence="2">
    <location>
        <begin position="727"/>
        <end position="747"/>
    </location>
</feature>
<dbReference type="EC" id="7.1.1.-"/>
<dbReference type="EMBL" id="AP002983">
    <property type="protein sequence ID" value="BAB33242.1"/>
    <property type="molecule type" value="Genomic_DNA"/>
</dbReference>
<dbReference type="RefSeq" id="NP_084842.1">
    <property type="nucleotide sequence ID" value="NC_002694.1"/>
</dbReference>
<dbReference type="SMR" id="Q9BBP6"/>
<dbReference type="GeneID" id="802885"/>
<dbReference type="GO" id="GO:0009535">
    <property type="term" value="C:chloroplast thylakoid membrane"/>
    <property type="evidence" value="ECO:0007669"/>
    <property type="project" value="UniProtKB-SubCell"/>
</dbReference>
<dbReference type="GO" id="GO:0008137">
    <property type="term" value="F:NADH dehydrogenase (ubiquinone) activity"/>
    <property type="evidence" value="ECO:0007669"/>
    <property type="project" value="InterPro"/>
</dbReference>
<dbReference type="GO" id="GO:0048038">
    <property type="term" value="F:quinone binding"/>
    <property type="evidence" value="ECO:0007669"/>
    <property type="project" value="UniProtKB-KW"/>
</dbReference>
<dbReference type="GO" id="GO:0042773">
    <property type="term" value="P:ATP synthesis coupled electron transport"/>
    <property type="evidence" value="ECO:0007669"/>
    <property type="project" value="InterPro"/>
</dbReference>
<dbReference type="GO" id="GO:0015990">
    <property type="term" value="P:electron transport coupled proton transport"/>
    <property type="evidence" value="ECO:0007669"/>
    <property type="project" value="TreeGrafter"/>
</dbReference>
<dbReference type="Gene3D" id="1.20.5.2700">
    <property type="match status" value="1"/>
</dbReference>
<dbReference type="InterPro" id="IPR002128">
    <property type="entry name" value="NADH_UbQ_OxRdtase_chlpt_su5_C"/>
</dbReference>
<dbReference type="InterPro" id="IPR018393">
    <property type="entry name" value="NADHpl_OxRdtase_5_subgr"/>
</dbReference>
<dbReference type="InterPro" id="IPR001750">
    <property type="entry name" value="ND/Mrp_TM"/>
</dbReference>
<dbReference type="InterPro" id="IPR003945">
    <property type="entry name" value="NU5C-like"/>
</dbReference>
<dbReference type="InterPro" id="IPR001516">
    <property type="entry name" value="Proton_antipo_N"/>
</dbReference>
<dbReference type="NCBIfam" id="TIGR01974">
    <property type="entry name" value="NDH_I_L"/>
    <property type="match status" value="1"/>
</dbReference>
<dbReference type="NCBIfam" id="NF005141">
    <property type="entry name" value="PRK06590.1"/>
    <property type="match status" value="1"/>
</dbReference>
<dbReference type="PANTHER" id="PTHR42829">
    <property type="entry name" value="NADH-UBIQUINONE OXIDOREDUCTASE CHAIN 5"/>
    <property type="match status" value="1"/>
</dbReference>
<dbReference type="PANTHER" id="PTHR42829:SF2">
    <property type="entry name" value="NADH-UBIQUINONE OXIDOREDUCTASE CHAIN 5"/>
    <property type="match status" value="1"/>
</dbReference>
<dbReference type="Pfam" id="PF01010">
    <property type="entry name" value="Proton_antipo_C"/>
    <property type="match status" value="1"/>
</dbReference>
<dbReference type="Pfam" id="PF00361">
    <property type="entry name" value="Proton_antipo_M"/>
    <property type="match status" value="1"/>
</dbReference>
<dbReference type="Pfam" id="PF00662">
    <property type="entry name" value="Proton_antipo_N"/>
    <property type="match status" value="1"/>
</dbReference>
<dbReference type="PRINTS" id="PR01434">
    <property type="entry name" value="NADHDHGNASE5"/>
</dbReference>
<dbReference type="PRINTS" id="PR01435">
    <property type="entry name" value="NPOXDRDTASE5"/>
</dbReference>
<gene>
    <name type="primary">ndhF</name>
</gene>
<organism>
    <name type="scientific">Lotus japonicus</name>
    <name type="common">Lotus corniculatus var. japonicus</name>
    <dbReference type="NCBI Taxonomy" id="34305"/>
    <lineage>
        <taxon>Eukaryota</taxon>
        <taxon>Viridiplantae</taxon>
        <taxon>Streptophyta</taxon>
        <taxon>Embryophyta</taxon>
        <taxon>Tracheophyta</taxon>
        <taxon>Spermatophyta</taxon>
        <taxon>Magnoliopsida</taxon>
        <taxon>eudicotyledons</taxon>
        <taxon>Gunneridae</taxon>
        <taxon>Pentapetalae</taxon>
        <taxon>rosids</taxon>
        <taxon>fabids</taxon>
        <taxon>Fabales</taxon>
        <taxon>Fabaceae</taxon>
        <taxon>Papilionoideae</taxon>
        <taxon>50 kb inversion clade</taxon>
        <taxon>NPAAA clade</taxon>
        <taxon>Hologalegina</taxon>
        <taxon>robinioid clade</taxon>
        <taxon>Loteae</taxon>
        <taxon>Lotus</taxon>
    </lineage>
</organism>
<geneLocation type="chloroplast"/>
<keyword id="KW-0150">Chloroplast</keyword>
<keyword id="KW-0472">Membrane</keyword>
<keyword id="KW-0520">NAD</keyword>
<keyword id="KW-0521">NADP</keyword>
<keyword id="KW-0934">Plastid</keyword>
<keyword id="KW-0618">Plastoquinone</keyword>
<keyword id="KW-0874">Quinone</keyword>
<keyword id="KW-0793">Thylakoid</keyword>
<keyword id="KW-1278">Translocase</keyword>
<keyword id="KW-0812">Transmembrane</keyword>
<keyword id="KW-1133">Transmembrane helix</keyword>
<keyword id="KW-0813">Transport</keyword>
<accession>Q9BBP6</accession>
<comment type="function">
    <text evidence="1">NDH shuttles electrons from NAD(P)H:plastoquinone, via FMN and iron-sulfur (Fe-S) centers, to quinones in the photosynthetic chain and possibly in a chloroplast respiratory chain. The immediate electron acceptor for the enzyme in this species is believed to be plastoquinone. Couples the redox reaction to proton translocation, and thus conserves the redox energy in a proton gradient (By similarity).</text>
</comment>
<comment type="catalytic activity">
    <reaction>
        <text>a plastoquinone + NADH + (n+1) H(+)(in) = a plastoquinol + NAD(+) + n H(+)(out)</text>
        <dbReference type="Rhea" id="RHEA:42608"/>
        <dbReference type="Rhea" id="RHEA-COMP:9561"/>
        <dbReference type="Rhea" id="RHEA-COMP:9562"/>
        <dbReference type="ChEBI" id="CHEBI:15378"/>
        <dbReference type="ChEBI" id="CHEBI:17757"/>
        <dbReference type="ChEBI" id="CHEBI:57540"/>
        <dbReference type="ChEBI" id="CHEBI:57945"/>
        <dbReference type="ChEBI" id="CHEBI:62192"/>
    </reaction>
</comment>
<comment type="catalytic activity">
    <reaction>
        <text>a plastoquinone + NADPH + (n+1) H(+)(in) = a plastoquinol + NADP(+) + n H(+)(out)</text>
        <dbReference type="Rhea" id="RHEA:42612"/>
        <dbReference type="Rhea" id="RHEA-COMP:9561"/>
        <dbReference type="Rhea" id="RHEA-COMP:9562"/>
        <dbReference type="ChEBI" id="CHEBI:15378"/>
        <dbReference type="ChEBI" id="CHEBI:17757"/>
        <dbReference type="ChEBI" id="CHEBI:57783"/>
        <dbReference type="ChEBI" id="CHEBI:58349"/>
        <dbReference type="ChEBI" id="CHEBI:62192"/>
    </reaction>
</comment>
<comment type="subunit">
    <text evidence="1">NDH is composed of at least 16 different subunits, 5 of which are encoded in the nucleus.</text>
</comment>
<comment type="subcellular location">
    <subcellularLocation>
        <location evidence="1">Plastid</location>
        <location evidence="1">Chloroplast thylakoid membrane</location>
        <topology evidence="1">Multi-pass membrane protein</topology>
    </subcellularLocation>
</comment>
<comment type="similarity">
    <text evidence="3">Belongs to the complex I subunit 5 family.</text>
</comment>
<proteinExistence type="inferred from homology"/>
<name>NU5C_LOTJA</name>